<gene>
    <name evidence="1" type="primary">bioB</name>
</gene>
<sequence length="335" mass="36880">MNQWMELANRVLAGAEVTDEEALSILHCPDEDILLLMHGAFHIRKHFYGKKVKLNMIMNAKSGLCPENCGYCSQSAISKAPIESYRMVNKETLLEGAKRAHDLNIGTYCIVASGRGPSNREVDQVVDAVQEIKETYGLKVCACLGLLKPEQAKRLKDAGVDRYNHNLNTSQRNHSNITTSHTYDDRVNTVEIAKESGLSPCSGAIIGIKETKQDVIDIAKSLKALDADSIPVNFLHAIDGTPLEGVNELNPLYCLKVLALFRFINPSKEIRISGGREVNLRSLQPLGLYAANSIFVGDYLTTAGQEETEDHKMLSDLGFEVESVEEMKASLSAKS</sequence>
<evidence type="ECO:0000255" key="1">
    <source>
        <dbReference type="HAMAP-Rule" id="MF_01694"/>
    </source>
</evidence>
<evidence type="ECO:0000255" key="2">
    <source>
        <dbReference type="PROSITE-ProRule" id="PRU01266"/>
    </source>
</evidence>
<evidence type="ECO:0000269" key="3">
    <source>
    </source>
</evidence>
<protein>
    <recommendedName>
        <fullName evidence="1">Biotin synthase</fullName>
        <ecNumber evidence="1">2.8.1.6</ecNumber>
    </recommendedName>
</protein>
<name>BIOB_BACNA</name>
<accession>Q8KZM7</accession>
<feature type="chain" id="PRO_0000381232" description="Biotin synthase">
    <location>
        <begin position="1"/>
        <end position="335"/>
    </location>
</feature>
<feature type="domain" description="Radical SAM core" evidence="2">
    <location>
        <begin position="47"/>
        <end position="276"/>
    </location>
</feature>
<feature type="binding site" evidence="1">
    <location>
        <position position="65"/>
    </location>
    <ligand>
        <name>[4Fe-4S] cluster</name>
        <dbReference type="ChEBI" id="CHEBI:49883"/>
        <note>4Fe-4S-S-AdoMet</note>
    </ligand>
</feature>
<feature type="binding site" evidence="1">
    <location>
        <position position="69"/>
    </location>
    <ligand>
        <name>[4Fe-4S] cluster</name>
        <dbReference type="ChEBI" id="CHEBI:49883"/>
        <note>4Fe-4S-S-AdoMet</note>
    </ligand>
</feature>
<feature type="binding site" evidence="1">
    <location>
        <position position="72"/>
    </location>
    <ligand>
        <name>[4Fe-4S] cluster</name>
        <dbReference type="ChEBI" id="CHEBI:49883"/>
        <note>4Fe-4S-S-AdoMet</note>
    </ligand>
</feature>
<feature type="binding site" evidence="1">
    <location>
        <position position="109"/>
    </location>
    <ligand>
        <name>[2Fe-2S] cluster</name>
        <dbReference type="ChEBI" id="CHEBI:190135"/>
    </ligand>
</feature>
<feature type="binding site" evidence="1">
    <location>
        <position position="141"/>
    </location>
    <ligand>
        <name>[2Fe-2S] cluster</name>
        <dbReference type="ChEBI" id="CHEBI:190135"/>
    </ligand>
</feature>
<feature type="binding site" evidence="1">
    <location>
        <position position="201"/>
    </location>
    <ligand>
        <name>[2Fe-2S] cluster</name>
        <dbReference type="ChEBI" id="CHEBI:190135"/>
    </ligand>
</feature>
<feature type="binding site" evidence="1">
    <location>
        <position position="271"/>
    </location>
    <ligand>
        <name>[2Fe-2S] cluster</name>
        <dbReference type="ChEBI" id="CHEBI:190135"/>
    </ligand>
</feature>
<keyword id="KW-0001">2Fe-2S</keyword>
<keyword id="KW-0004">4Fe-4S</keyword>
<keyword id="KW-0093">Biotin biosynthesis</keyword>
<keyword id="KW-0408">Iron</keyword>
<keyword id="KW-0411">Iron-sulfur</keyword>
<keyword id="KW-0479">Metal-binding</keyword>
<keyword id="KW-0949">S-adenosyl-L-methionine</keyword>
<keyword id="KW-0808">Transferase</keyword>
<organism>
    <name type="scientific">Bacillus subtilis subsp. natto</name>
    <dbReference type="NCBI Taxonomy" id="86029"/>
    <lineage>
        <taxon>Bacteria</taxon>
        <taxon>Bacillati</taxon>
        <taxon>Bacillota</taxon>
        <taxon>Bacilli</taxon>
        <taxon>Bacillales</taxon>
        <taxon>Bacillaceae</taxon>
        <taxon>Bacillus</taxon>
    </lineage>
</organism>
<dbReference type="EC" id="2.8.1.6" evidence="1"/>
<dbReference type="EMBL" id="AB088066">
    <property type="protein sequence ID" value="BAC03243.1"/>
    <property type="molecule type" value="Genomic_DNA"/>
</dbReference>
<dbReference type="SMR" id="Q8KZM7"/>
<dbReference type="UniPathway" id="UPA00078">
    <property type="reaction ID" value="UER00162"/>
</dbReference>
<dbReference type="GO" id="GO:0051537">
    <property type="term" value="F:2 iron, 2 sulfur cluster binding"/>
    <property type="evidence" value="ECO:0007669"/>
    <property type="project" value="UniProtKB-KW"/>
</dbReference>
<dbReference type="GO" id="GO:0051539">
    <property type="term" value="F:4 iron, 4 sulfur cluster binding"/>
    <property type="evidence" value="ECO:0007669"/>
    <property type="project" value="UniProtKB-KW"/>
</dbReference>
<dbReference type="GO" id="GO:0004076">
    <property type="term" value="F:biotin synthase activity"/>
    <property type="evidence" value="ECO:0007669"/>
    <property type="project" value="UniProtKB-UniRule"/>
</dbReference>
<dbReference type="GO" id="GO:0005506">
    <property type="term" value="F:iron ion binding"/>
    <property type="evidence" value="ECO:0007669"/>
    <property type="project" value="UniProtKB-UniRule"/>
</dbReference>
<dbReference type="GO" id="GO:0009102">
    <property type="term" value="P:biotin biosynthetic process"/>
    <property type="evidence" value="ECO:0007669"/>
    <property type="project" value="UniProtKB-UniRule"/>
</dbReference>
<dbReference type="CDD" id="cd01335">
    <property type="entry name" value="Radical_SAM"/>
    <property type="match status" value="1"/>
</dbReference>
<dbReference type="FunFam" id="3.20.20.70:FF:000026">
    <property type="entry name" value="Biotin synthase"/>
    <property type="match status" value="1"/>
</dbReference>
<dbReference type="Gene3D" id="3.20.20.70">
    <property type="entry name" value="Aldolase class I"/>
    <property type="match status" value="1"/>
</dbReference>
<dbReference type="HAMAP" id="MF_01694">
    <property type="entry name" value="BioB"/>
    <property type="match status" value="1"/>
</dbReference>
<dbReference type="InterPro" id="IPR013785">
    <property type="entry name" value="Aldolase_TIM"/>
</dbReference>
<dbReference type="InterPro" id="IPR010722">
    <property type="entry name" value="BATS_dom"/>
</dbReference>
<dbReference type="InterPro" id="IPR002684">
    <property type="entry name" value="Biotin_synth/BioAB"/>
</dbReference>
<dbReference type="InterPro" id="IPR024177">
    <property type="entry name" value="Biotin_synthase"/>
</dbReference>
<dbReference type="InterPro" id="IPR006638">
    <property type="entry name" value="Elp3/MiaA/NifB-like_rSAM"/>
</dbReference>
<dbReference type="InterPro" id="IPR007197">
    <property type="entry name" value="rSAM"/>
</dbReference>
<dbReference type="NCBIfam" id="TIGR00433">
    <property type="entry name" value="bioB"/>
    <property type="match status" value="1"/>
</dbReference>
<dbReference type="PANTHER" id="PTHR22976">
    <property type="entry name" value="BIOTIN SYNTHASE"/>
    <property type="match status" value="1"/>
</dbReference>
<dbReference type="PANTHER" id="PTHR22976:SF2">
    <property type="entry name" value="BIOTIN SYNTHASE, MITOCHONDRIAL"/>
    <property type="match status" value="1"/>
</dbReference>
<dbReference type="Pfam" id="PF06968">
    <property type="entry name" value="BATS"/>
    <property type="match status" value="1"/>
</dbReference>
<dbReference type="Pfam" id="PF04055">
    <property type="entry name" value="Radical_SAM"/>
    <property type="match status" value="1"/>
</dbReference>
<dbReference type="PIRSF" id="PIRSF001619">
    <property type="entry name" value="Biotin_synth"/>
    <property type="match status" value="1"/>
</dbReference>
<dbReference type="SFLD" id="SFLDG01060">
    <property type="entry name" value="BATS_domain_containing"/>
    <property type="match status" value="1"/>
</dbReference>
<dbReference type="SFLD" id="SFLDG01278">
    <property type="entry name" value="biotin_synthase_like"/>
    <property type="match status" value="1"/>
</dbReference>
<dbReference type="SMART" id="SM00876">
    <property type="entry name" value="BATS"/>
    <property type="match status" value="1"/>
</dbReference>
<dbReference type="SMART" id="SM00729">
    <property type="entry name" value="Elp3"/>
    <property type="match status" value="1"/>
</dbReference>
<dbReference type="SUPFAM" id="SSF102114">
    <property type="entry name" value="Radical SAM enzymes"/>
    <property type="match status" value="1"/>
</dbReference>
<dbReference type="PROSITE" id="PS51918">
    <property type="entry name" value="RADICAL_SAM"/>
    <property type="match status" value="1"/>
</dbReference>
<comment type="function">
    <text evidence="1 3">Catalyzes the conversion of dethiobiotin (DTB) to biotin by the insertion of a sulfur atom into dethiobiotin via a radical-based mechanism.</text>
</comment>
<comment type="catalytic activity">
    <reaction evidence="1">
        <text>(4R,5S)-dethiobiotin + (sulfur carrier)-SH + 2 reduced [2Fe-2S]-[ferredoxin] + 2 S-adenosyl-L-methionine = (sulfur carrier)-H + biotin + 2 5'-deoxyadenosine + 2 L-methionine + 2 oxidized [2Fe-2S]-[ferredoxin]</text>
        <dbReference type="Rhea" id="RHEA:22060"/>
        <dbReference type="Rhea" id="RHEA-COMP:10000"/>
        <dbReference type="Rhea" id="RHEA-COMP:10001"/>
        <dbReference type="Rhea" id="RHEA-COMP:14737"/>
        <dbReference type="Rhea" id="RHEA-COMP:14739"/>
        <dbReference type="ChEBI" id="CHEBI:17319"/>
        <dbReference type="ChEBI" id="CHEBI:29917"/>
        <dbReference type="ChEBI" id="CHEBI:33737"/>
        <dbReference type="ChEBI" id="CHEBI:33738"/>
        <dbReference type="ChEBI" id="CHEBI:57586"/>
        <dbReference type="ChEBI" id="CHEBI:57844"/>
        <dbReference type="ChEBI" id="CHEBI:59789"/>
        <dbReference type="ChEBI" id="CHEBI:64428"/>
        <dbReference type="ChEBI" id="CHEBI:149473"/>
        <dbReference type="EC" id="2.8.1.6"/>
    </reaction>
</comment>
<comment type="cofactor">
    <cofactor evidence="1">
        <name>[4Fe-4S] cluster</name>
        <dbReference type="ChEBI" id="CHEBI:49883"/>
    </cofactor>
    <text evidence="1">Binds 1 [4Fe-4S] cluster. The cluster is coordinated with 3 cysteines and an exchangeable S-adenosyl-L-methionine.</text>
</comment>
<comment type="cofactor">
    <cofactor evidence="1">
        <name>[2Fe-2S] cluster</name>
        <dbReference type="ChEBI" id="CHEBI:190135"/>
    </cofactor>
    <text evidence="1">Binds 1 [2Fe-2S] cluster. The cluster is coordinated with 3 cysteines and 1 arginine.</text>
</comment>
<comment type="pathway">
    <text evidence="1">Cofactor biosynthesis; biotin biosynthesis; biotin from 7,8-diaminononanoate: step 2/2.</text>
</comment>
<comment type="subunit">
    <text evidence="1">Homodimer.</text>
</comment>
<comment type="similarity">
    <text evidence="1">Belongs to the radical SAM superfamily. Biotin synthase family.</text>
</comment>
<reference key="1">
    <citation type="journal article" date="2004" name="Biosci. Biotechnol. Biochem.">
        <title>Genetic analysis of an incomplete bio operon in a biotin auxotrophic strain of Bacillus subtilis natto OK2.</title>
        <authorList>
            <person name="Sasaki M."/>
            <person name="Kawamura F."/>
            <person name="Kurusu Y."/>
        </authorList>
    </citation>
    <scope>NUCLEOTIDE SEQUENCE [GENOMIC DNA]</scope>
    <scope>FUNCTION</scope>
</reference>
<proteinExistence type="inferred from homology"/>